<organism>
    <name type="scientific">Brucella abortus biovar 1 (strain 9-941)</name>
    <dbReference type="NCBI Taxonomy" id="262698"/>
    <lineage>
        <taxon>Bacteria</taxon>
        <taxon>Pseudomonadati</taxon>
        <taxon>Pseudomonadota</taxon>
        <taxon>Alphaproteobacteria</taxon>
        <taxon>Hyphomicrobiales</taxon>
        <taxon>Brucellaceae</taxon>
        <taxon>Brucella/Ochrobactrum group</taxon>
        <taxon>Brucella</taxon>
    </lineage>
</organism>
<dbReference type="EC" id="2.1.1.170" evidence="1"/>
<dbReference type="EMBL" id="AE017223">
    <property type="protein sequence ID" value="AAX75336.1"/>
    <property type="molecule type" value="Genomic_DNA"/>
</dbReference>
<dbReference type="RefSeq" id="WP_002967027.1">
    <property type="nucleotide sequence ID" value="NC_006932.1"/>
</dbReference>
<dbReference type="SMR" id="Q57AJ8"/>
<dbReference type="EnsemblBacteria" id="AAX75336">
    <property type="protein sequence ID" value="AAX75336"/>
    <property type="gene ID" value="BruAb1_2035"/>
</dbReference>
<dbReference type="GeneID" id="97534679"/>
<dbReference type="KEGG" id="bmb:BruAb1_2035"/>
<dbReference type="HOGENOM" id="CLU_065341_1_1_5"/>
<dbReference type="Proteomes" id="UP000000540">
    <property type="component" value="Chromosome I"/>
</dbReference>
<dbReference type="GO" id="GO:0005829">
    <property type="term" value="C:cytosol"/>
    <property type="evidence" value="ECO:0007669"/>
    <property type="project" value="TreeGrafter"/>
</dbReference>
<dbReference type="GO" id="GO:0070043">
    <property type="term" value="F:rRNA (guanine-N7-)-methyltransferase activity"/>
    <property type="evidence" value="ECO:0007669"/>
    <property type="project" value="UniProtKB-UniRule"/>
</dbReference>
<dbReference type="Gene3D" id="3.40.50.150">
    <property type="entry name" value="Vaccinia Virus protein VP39"/>
    <property type="match status" value="1"/>
</dbReference>
<dbReference type="HAMAP" id="MF_00074">
    <property type="entry name" value="16SrRNA_methyltr_G"/>
    <property type="match status" value="1"/>
</dbReference>
<dbReference type="InterPro" id="IPR003682">
    <property type="entry name" value="rRNA_ssu_MeTfrase_G"/>
</dbReference>
<dbReference type="InterPro" id="IPR029063">
    <property type="entry name" value="SAM-dependent_MTases_sf"/>
</dbReference>
<dbReference type="NCBIfam" id="TIGR00138">
    <property type="entry name" value="rsmG_gidB"/>
    <property type="match status" value="1"/>
</dbReference>
<dbReference type="PANTHER" id="PTHR31760">
    <property type="entry name" value="S-ADENOSYL-L-METHIONINE-DEPENDENT METHYLTRANSFERASES SUPERFAMILY PROTEIN"/>
    <property type="match status" value="1"/>
</dbReference>
<dbReference type="PANTHER" id="PTHR31760:SF0">
    <property type="entry name" value="S-ADENOSYL-L-METHIONINE-DEPENDENT METHYLTRANSFERASES SUPERFAMILY PROTEIN"/>
    <property type="match status" value="1"/>
</dbReference>
<dbReference type="Pfam" id="PF02527">
    <property type="entry name" value="GidB"/>
    <property type="match status" value="1"/>
</dbReference>
<dbReference type="PIRSF" id="PIRSF003078">
    <property type="entry name" value="GidB"/>
    <property type="match status" value="1"/>
</dbReference>
<dbReference type="SUPFAM" id="SSF53335">
    <property type="entry name" value="S-adenosyl-L-methionine-dependent methyltransferases"/>
    <property type="match status" value="1"/>
</dbReference>
<proteinExistence type="inferred from homology"/>
<name>RSMG_BRUAB</name>
<sequence length="213" mass="23473">MSADIRFDSLKTIVPAVSRETADRLIAFEDLFRKWSKAINLASPSTLADLWNRHILDSAQLFPLAKEATRWLDIGSGGGFPGIVTACFLAERSGGCIDLVESAGKKAAFLRTAAGHLHVPARVHSARIESMWEKIETPQVVTARALASLGDLFTLAEPWLSDGAKALFQKGRDYQREIDESRVGWSFDLVKHPSAIDQASVILEISNLRRKTD</sequence>
<reference key="1">
    <citation type="journal article" date="2005" name="J. Bacteriol.">
        <title>Completion of the genome sequence of Brucella abortus and comparison to the highly similar genomes of Brucella melitensis and Brucella suis.</title>
        <authorList>
            <person name="Halling S.M."/>
            <person name="Peterson-Burch B.D."/>
            <person name="Bricker B.J."/>
            <person name="Zuerner R.L."/>
            <person name="Qing Z."/>
            <person name="Li L.-L."/>
            <person name="Kapur V."/>
            <person name="Alt D.P."/>
            <person name="Olsen S.C."/>
        </authorList>
    </citation>
    <scope>NUCLEOTIDE SEQUENCE [LARGE SCALE GENOMIC DNA]</scope>
    <source>
        <strain>9-941</strain>
    </source>
</reference>
<protein>
    <recommendedName>
        <fullName evidence="1">Ribosomal RNA small subunit methyltransferase G</fullName>
        <ecNumber evidence="1">2.1.1.170</ecNumber>
    </recommendedName>
    <alternativeName>
        <fullName evidence="1">16S rRNA 7-methylguanosine methyltransferase</fullName>
        <shortName evidence="1">16S rRNA m7G methyltransferase</shortName>
    </alternativeName>
</protein>
<keyword id="KW-0963">Cytoplasm</keyword>
<keyword id="KW-0489">Methyltransferase</keyword>
<keyword id="KW-0698">rRNA processing</keyword>
<keyword id="KW-0949">S-adenosyl-L-methionine</keyword>
<keyword id="KW-0808">Transferase</keyword>
<gene>
    <name evidence="1" type="primary">rsmG</name>
    <name type="ordered locus">BruAb1_2035</name>
</gene>
<accession>Q57AJ8</accession>
<feature type="chain" id="PRO_0000184228" description="Ribosomal RNA small subunit methyltransferase G">
    <location>
        <begin position="1"/>
        <end position="213"/>
    </location>
</feature>
<feature type="binding site" evidence="1">
    <location>
        <position position="75"/>
    </location>
    <ligand>
        <name>S-adenosyl-L-methionine</name>
        <dbReference type="ChEBI" id="CHEBI:59789"/>
    </ligand>
</feature>
<feature type="binding site" evidence="1">
    <location>
        <position position="80"/>
    </location>
    <ligand>
        <name>S-adenosyl-L-methionine</name>
        <dbReference type="ChEBI" id="CHEBI:59789"/>
    </ligand>
</feature>
<feature type="binding site" evidence="1">
    <location>
        <begin position="128"/>
        <end position="129"/>
    </location>
    <ligand>
        <name>S-adenosyl-L-methionine</name>
        <dbReference type="ChEBI" id="CHEBI:59789"/>
    </ligand>
</feature>
<feature type="binding site" evidence="1">
    <location>
        <position position="144"/>
    </location>
    <ligand>
        <name>S-adenosyl-L-methionine</name>
        <dbReference type="ChEBI" id="CHEBI:59789"/>
    </ligand>
</feature>
<comment type="function">
    <text evidence="1">Specifically methylates the N7 position of guanine in position 527 of 16S rRNA.</text>
</comment>
<comment type="catalytic activity">
    <reaction evidence="1">
        <text>guanosine(527) in 16S rRNA + S-adenosyl-L-methionine = N(7)-methylguanosine(527) in 16S rRNA + S-adenosyl-L-homocysteine</text>
        <dbReference type="Rhea" id="RHEA:42732"/>
        <dbReference type="Rhea" id="RHEA-COMP:10209"/>
        <dbReference type="Rhea" id="RHEA-COMP:10210"/>
        <dbReference type="ChEBI" id="CHEBI:57856"/>
        <dbReference type="ChEBI" id="CHEBI:59789"/>
        <dbReference type="ChEBI" id="CHEBI:74269"/>
        <dbReference type="ChEBI" id="CHEBI:74480"/>
        <dbReference type="EC" id="2.1.1.170"/>
    </reaction>
</comment>
<comment type="subcellular location">
    <subcellularLocation>
        <location evidence="1">Cytoplasm</location>
    </subcellularLocation>
</comment>
<comment type="similarity">
    <text evidence="1">Belongs to the methyltransferase superfamily. RNA methyltransferase RsmG family.</text>
</comment>
<evidence type="ECO:0000255" key="1">
    <source>
        <dbReference type="HAMAP-Rule" id="MF_00074"/>
    </source>
</evidence>